<protein>
    <recommendedName>
        <fullName>DNA polymerase III subunit alpha</fullName>
        <ecNumber>2.7.7.7</ecNumber>
    </recommendedName>
</protein>
<proteinExistence type="inferred from homology"/>
<sequence length="1207" mass="135675">MRPEFIHLRTQSSYSFLESALTIEKVVELASSNKMPAICLADKGNLFGSLEFALYAVKKGLQPIHGVILNIKYDIDIFAQILLIAKDETGYKNLLKLSSLTFTKNDRKLCDHIDFEDLIEYQEGLIALCCYTDGIVGKCLLARSEEQAMLFARKLQDILGDRFYFEIMRHDLPEEQFIEDSYIRIAAELAIPLVATNKVLFSEKTMHDAHDVLLCISAGVTKEYPDRKTVSENCYFRSPHEMIELFSDLPSAIQNTVNLRERCYFAAHANPPMLPNFATKDISETDLIRKDAKEGLLARLATKFKSENIPLQNQEELKTEYFARLNYELDIICNMNFAGYFLIVSDFIKWSKKEGILVGPGRGSGAGSVVAWSLLITDLDPIKFGLLFERFLNPERISMPDFDIDFCQERREEVINYVRSKYGNNRVGQIITFGKMQAKAVIKDVARVLSLPYKFADYLTELVPFSAVNPVSLEQAMREVPELANAAKGNGLYNLEGEAELIKLVLDTSLILEGLHRHSSTHAAGIVIAGTDLVDIVPVYKDANSDMLVVGYSMKYSEIAGLIKFDFLGLQTLTVITDCKKLLKEQGIEVDFNNMTFDDNKTYQMLCKGKGVGVFQFESIGMKDALRRLKPDSIHDLIALGALYRPGPMENIPTYIACKHKLQQPDYLHELLKPILEETYGVVIYQEQVQRIAQILAGYTLGAADLLRRAMGKKIKKEMEEQEEIFVKGAIANNISESQAKSIFATVAKFAGYGFNKAHAAAYGVISYQTAYLKANYPAEFLVACLNLELNNHDKINLFLQEAKDSGIKIIAPNINISEGYFSVKSVIPQAATCHPQGPLCHPRVGGYPEKVKTVLNHESMKMDSRFCGNDIKGSRNDIEDTGYDKEKSTIIFALGAIKGVTPNFGKLVTDERKARGAFKSITDFIERLPLKSINSKLLENLIKSGCFDELHDNRLQLFSSISKLLAYSASYHAEQESNQFSLIKVSSLSPNILIASDYADNNTLAFYEFESMGLFISNHPLTQYQEIFSRLNILNTADLHNNLPDGTNRVNLAGVIQKKDSRMSARGRFVTLVLSDPENIFELSIFSEEVLKDYVHLLDVKSLVVVNCDIVKDEGGIKLTAKSFSSIEDAINNKQFELQLYPQNHEELRQIVTLLAARTNNRDQSNAKATIYLQSEGVKNFVAKITLPEKFFLQGQDFEILKGYSK</sequence>
<reference key="1">
    <citation type="journal article" date="2005" name="PLoS Biol.">
        <title>The genome sequence of Rickettsia felis identifies the first putative conjugative plasmid in an obligate intracellular parasite.</title>
        <authorList>
            <person name="Ogata H."/>
            <person name="Renesto P."/>
            <person name="Audic S."/>
            <person name="Robert C."/>
            <person name="Blanc G."/>
            <person name="Fournier P.-E."/>
            <person name="Parinello H."/>
            <person name="Claverie J.-M."/>
            <person name="Raoult D."/>
        </authorList>
    </citation>
    <scope>NUCLEOTIDE SEQUENCE [LARGE SCALE GENOMIC DNA]</scope>
    <source>
        <strain>ATCC VR-1525 / URRWXCal2</strain>
    </source>
</reference>
<feature type="chain" id="PRO_0000280957" description="DNA polymerase III subunit alpha">
    <location>
        <begin position="1"/>
        <end position="1207"/>
    </location>
</feature>
<gene>
    <name type="primary">dnaE</name>
    <name type="ordered locus">RF_1244</name>
</gene>
<accession>Q4UK40</accession>
<keyword id="KW-0963">Cytoplasm</keyword>
<keyword id="KW-0235">DNA replication</keyword>
<keyword id="KW-0239">DNA-directed DNA polymerase</keyword>
<keyword id="KW-0548">Nucleotidyltransferase</keyword>
<keyword id="KW-0808">Transferase</keyword>
<dbReference type="EC" id="2.7.7.7"/>
<dbReference type="EMBL" id="CP000053">
    <property type="protein sequence ID" value="AAY62095.1"/>
    <property type="molecule type" value="Genomic_DNA"/>
</dbReference>
<dbReference type="SMR" id="Q4UK40"/>
<dbReference type="STRING" id="315456.RF_1244"/>
<dbReference type="KEGG" id="rfe:RF_1244"/>
<dbReference type="eggNOG" id="COG0587">
    <property type="taxonomic scope" value="Bacteria"/>
</dbReference>
<dbReference type="HOGENOM" id="CLU_001600_0_0_5"/>
<dbReference type="OrthoDB" id="9803237at2"/>
<dbReference type="Proteomes" id="UP000008548">
    <property type="component" value="Chromosome"/>
</dbReference>
<dbReference type="GO" id="GO:0005737">
    <property type="term" value="C:cytoplasm"/>
    <property type="evidence" value="ECO:0007669"/>
    <property type="project" value="UniProtKB-SubCell"/>
</dbReference>
<dbReference type="GO" id="GO:0008408">
    <property type="term" value="F:3'-5' exonuclease activity"/>
    <property type="evidence" value="ECO:0007669"/>
    <property type="project" value="InterPro"/>
</dbReference>
<dbReference type="GO" id="GO:0003887">
    <property type="term" value="F:DNA-directed DNA polymerase activity"/>
    <property type="evidence" value="ECO:0007669"/>
    <property type="project" value="UniProtKB-KW"/>
</dbReference>
<dbReference type="GO" id="GO:0006260">
    <property type="term" value="P:DNA replication"/>
    <property type="evidence" value="ECO:0007669"/>
    <property type="project" value="UniProtKB-KW"/>
</dbReference>
<dbReference type="CDD" id="cd04485">
    <property type="entry name" value="DnaE_OBF"/>
    <property type="match status" value="1"/>
</dbReference>
<dbReference type="CDD" id="cd07433">
    <property type="entry name" value="PHP_PolIIIA_DnaE1"/>
    <property type="match status" value="1"/>
</dbReference>
<dbReference type="Gene3D" id="1.10.150.870">
    <property type="match status" value="1"/>
</dbReference>
<dbReference type="Gene3D" id="1.10.10.1600">
    <property type="entry name" value="Bacterial DNA polymerase III alpha subunit, thumb domain"/>
    <property type="match status" value="1"/>
</dbReference>
<dbReference type="Gene3D" id="3.20.20.140">
    <property type="entry name" value="Metal-dependent hydrolases"/>
    <property type="match status" value="1"/>
</dbReference>
<dbReference type="InterPro" id="IPR011708">
    <property type="entry name" value="DNA_pol3_alpha_NTPase_dom"/>
</dbReference>
<dbReference type="InterPro" id="IPR041931">
    <property type="entry name" value="DNA_pol3_alpha_thumb_dom"/>
</dbReference>
<dbReference type="InterPro" id="IPR040982">
    <property type="entry name" value="DNA_pol3_finger"/>
</dbReference>
<dbReference type="InterPro" id="IPR004805">
    <property type="entry name" value="DnaE2/DnaE/PolC"/>
</dbReference>
<dbReference type="InterPro" id="IPR029460">
    <property type="entry name" value="DNAPol_HHH"/>
</dbReference>
<dbReference type="InterPro" id="IPR004013">
    <property type="entry name" value="PHP_dom"/>
</dbReference>
<dbReference type="InterPro" id="IPR003141">
    <property type="entry name" value="Pol/His_phosphatase_N"/>
</dbReference>
<dbReference type="InterPro" id="IPR016195">
    <property type="entry name" value="Pol/histidinol_Pase-like"/>
</dbReference>
<dbReference type="InterPro" id="IPR049821">
    <property type="entry name" value="PolIIIA_DnaE1_PHP"/>
</dbReference>
<dbReference type="NCBIfam" id="TIGR00594">
    <property type="entry name" value="polc"/>
    <property type="match status" value="1"/>
</dbReference>
<dbReference type="NCBIfam" id="NF004226">
    <property type="entry name" value="PRK05673.1"/>
    <property type="match status" value="1"/>
</dbReference>
<dbReference type="PANTHER" id="PTHR32294">
    <property type="entry name" value="DNA POLYMERASE III SUBUNIT ALPHA"/>
    <property type="match status" value="1"/>
</dbReference>
<dbReference type="PANTHER" id="PTHR32294:SF0">
    <property type="entry name" value="DNA POLYMERASE III SUBUNIT ALPHA"/>
    <property type="match status" value="1"/>
</dbReference>
<dbReference type="Pfam" id="PF07733">
    <property type="entry name" value="DNA_pol3_alpha"/>
    <property type="match status" value="1"/>
</dbReference>
<dbReference type="Pfam" id="PF17657">
    <property type="entry name" value="DNA_pol3_finger"/>
    <property type="match status" value="1"/>
</dbReference>
<dbReference type="Pfam" id="PF14579">
    <property type="entry name" value="HHH_6"/>
    <property type="match status" value="1"/>
</dbReference>
<dbReference type="Pfam" id="PF02811">
    <property type="entry name" value="PHP"/>
    <property type="match status" value="1"/>
</dbReference>
<dbReference type="SMART" id="SM00481">
    <property type="entry name" value="POLIIIAc"/>
    <property type="match status" value="1"/>
</dbReference>
<dbReference type="SUPFAM" id="SSF89550">
    <property type="entry name" value="PHP domain-like"/>
    <property type="match status" value="1"/>
</dbReference>
<evidence type="ECO:0000250" key="1"/>
<evidence type="ECO:0000305" key="2"/>
<organism>
    <name type="scientific">Rickettsia felis (strain ATCC VR-1525 / URRWXCal2)</name>
    <name type="common">Rickettsia azadi</name>
    <dbReference type="NCBI Taxonomy" id="315456"/>
    <lineage>
        <taxon>Bacteria</taxon>
        <taxon>Pseudomonadati</taxon>
        <taxon>Pseudomonadota</taxon>
        <taxon>Alphaproteobacteria</taxon>
        <taxon>Rickettsiales</taxon>
        <taxon>Rickettsiaceae</taxon>
        <taxon>Rickettsieae</taxon>
        <taxon>Rickettsia</taxon>
        <taxon>spotted fever group</taxon>
    </lineage>
</organism>
<name>DPO3A_RICFE</name>
<comment type="function">
    <text evidence="1">DNA polymerase III is a complex, multichain enzyme responsible for most of the replicative synthesis in bacteria. This DNA polymerase also exhibits 3' to 5' exonuclease activity. The alpha chain is the DNA polymerase (By similarity).</text>
</comment>
<comment type="catalytic activity">
    <reaction>
        <text>DNA(n) + a 2'-deoxyribonucleoside 5'-triphosphate = DNA(n+1) + diphosphate</text>
        <dbReference type="Rhea" id="RHEA:22508"/>
        <dbReference type="Rhea" id="RHEA-COMP:17339"/>
        <dbReference type="Rhea" id="RHEA-COMP:17340"/>
        <dbReference type="ChEBI" id="CHEBI:33019"/>
        <dbReference type="ChEBI" id="CHEBI:61560"/>
        <dbReference type="ChEBI" id="CHEBI:173112"/>
        <dbReference type="EC" id="2.7.7.7"/>
    </reaction>
</comment>
<comment type="subunit">
    <text evidence="1">DNA polymerase III contains a core (composed of alpha, epsilon and theta chains) that associates with a tau subunit. This core dimerizes to form the PolIII' complex. PolIII' associates with the gamma complex (composed of gamma, delta, delta', psi and chi chains) and with the beta chain to form the complete DNA polymerase III complex (By similarity).</text>
</comment>
<comment type="subcellular location">
    <subcellularLocation>
        <location evidence="1">Cytoplasm</location>
    </subcellularLocation>
</comment>
<comment type="similarity">
    <text evidence="2">Belongs to the DNA polymerase type-C family. DnaE subfamily.</text>
</comment>